<feature type="chain" id="PRO_1000074607" description="Ribosome-recycling factor">
    <location>
        <begin position="1"/>
        <end position="185"/>
    </location>
</feature>
<dbReference type="EMBL" id="CP000725">
    <property type="protein sequence ID" value="ABV09772.1"/>
    <property type="molecule type" value="Genomic_DNA"/>
</dbReference>
<dbReference type="RefSeq" id="WP_012130531.1">
    <property type="nucleotide sequence ID" value="NC_009785.1"/>
</dbReference>
<dbReference type="SMR" id="A8AY70"/>
<dbReference type="STRING" id="467705.SGO_1451"/>
<dbReference type="KEGG" id="sgo:SGO_1451"/>
<dbReference type="eggNOG" id="COG0233">
    <property type="taxonomic scope" value="Bacteria"/>
</dbReference>
<dbReference type="HOGENOM" id="CLU_073981_2_0_9"/>
<dbReference type="Proteomes" id="UP000001131">
    <property type="component" value="Chromosome"/>
</dbReference>
<dbReference type="GO" id="GO:0005737">
    <property type="term" value="C:cytoplasm"/>
    <property type="evidence" value="ECO:0007669"/>
    <property type="project" value="UniProtKB-SubCell"/>
</dbReference>
<dbReference type="GO" id="GO:0043023">
    <property type="term" value="F:ribosomal large subunit binding"/>
    <property type="evidence" value="ECO:0007669"/>
    <property type="project" value="TreeGrafter"/>
</dbReference>
<dbReference type="GO" id="GO:0006415">
    <property type="term" value="P:translational termination"/>
    <property type="evidence" value="ECO:0007669"/>
    <property type="project" value="UniProtKB-UniRule"/>
</dbReference>
<dbReference type="CDD" id="cd00520">
    <property type="entry name" value="RRF"/>
    <property type="match status" value="1"/>
</dbReference>
<dbReference type="FunFam" id="1.10.132.20:FF:000001">
    <property type="entry name" value="Ribosome-recycling factor"/>
    <property type="match status" value="1"/>
</dbReference>
<dbReference type="FunFam" id="3.30.1360.40:FF:000001">
    <property type="entry name" value="Ribosome-recycling factor"/>
    <property type="match status" value="1"/>
</dbReference>
<dbReference type="Gene3D" id="3.30.1360.40">
    <property type="match status" value="1"/>
</dbReference>
<dbReference type="Gene3D" id="1.10.132.20">
    <property type="entry name" value="Ribosome-recycling factor"/>
    <property type="match status" value="1"/>
</dbReference>
<dbReference type="HAMAP" id="MF_00040">
    <property type="entry name" value="RRF"/>
    <property type="match status" value="1"/>
</dbReference>
<dbReference type="InterPro" id="IPR002661">
    <property type="entry name" value="Ribosome_recyc_fac"/>
</dbReference>
<dbReference type="InterPro" id="IPR023584">
    <property type="entry name" value="Ribosome_recyc_fac_dom"/>
</dbReference>
<dbReference type="InterPro" id="IPR036191">
    <property type="entry name" value="RRF_sf"/>
</dbReference>
<dbReference type="NCBIfam" id="TIGR00496">
    <property type="entry name" value="frr"/>
    <property type="match status" value="1"/>
</dbReference>
<dbReference type="PANTHER" id="PTHR20982:SF3">
    <property type="entry name" value="MITOCHONDRIAL RIBOSOME RECYCLING FACTOR PSEUDO 1"/>
    <property type="match status" value="1"/>
</dbReference>
<dbReference type="PANTHER" id="PTHR20982">
    <property type="entry name" value="RIBOSOME RECYCLING FACTOR"/>
    <property type="match status" value="1"/>
</dbReference>
<dbReference type="Pfam" id="PF01765">
    <property type="entry name" value="RRF"/>
    <property type="match status" value="1"/>
</dbReference>
<dbReference type="SUPFAM" id="SSF55194">
    <property type="entry name" value="Ribosome recycling factor, RRF"/>
    <property type="match status" value="1"/>
</dbReference>
<comment type="function">
    <text evidence="1">Responsible for the release of ribosomes from messenger RNA at the termination of protein biosynthesis. May increase the efficiency of translation by recycling ribosomes from one round of translation to another.</text>
</comment>
<comment type="subcellular location">
    <subcellularLocation>
        <location evidence="1">Cytoplasm</location>
    </subcellularLocation>
</comment>
<comment type="similarity">
    <text evidence="1">Belongs to the RRF family.</text>
</comment>
<accession>A8AY70</accession>
<proteinExistence type="inferred from homology"/>
<reference key="1">
    <citation type="journal article" date="2007" name="J. Bacteriol.">
        <title>Genome-wide transcriptional changes in Streptococcus gordonii in response to competence signaling peptide.</title>
        <authorList>
            <person name="Vickerman M.M."/>
            <person name="Iobst S."/>
            <person name="Jesionowski A.M."/>
            <person name="Gill S.R."/>
        </authorList>
    </citation>
    <scope>NUCLEOTIDE SEQUENCE [LARGE SCALE GENOMIC DNA]</scope>
    <source>
        <strain>Challis / ATCC 35105 / BCRC 15272 / CH1 / DL1 / V288</strain>
    </source>
</reference>
<name>RRF_STRGC</name>
<evidence type="ECO:0000255" key="1">
    <source>
        <dbReference type="HAMAP-Rule" id="MF_00040"/>
    </source>
</evidence>
<protein>
    <recommendedName>
        <fullName evidence="1">Ribosome-recycling factor</fullName>
        <shortName evidence="1">RRF</shortName>
    </recommendedName>
    <alternativeName>
        <fullName evidence="1">Ribosome-releasing factor</fullName>
    </alternativeName>
</protein>
<keyword id="KW-0963">Cytoplasm</keyword>
<keyword id="KW-0648">Protein biosynthesis</keyword>
<keyword id="KW-1185">Reference proteome</keyword>
<gene>
    <name evidence="1" type="primary">frr</name>
    <name type="ordered locus">SGO_1451</name>
</gene>
<organism>
    <name type="scientific">Streptococcus gordonii (strain Challis / ATCC 35105 / BCRC 15272 / CH1 / DL1 / V288)</name>
    <dbReference type="NCBI Taxonomy" id="467705"/>
    <lineage>
        <taxon>Bacteria</taxon>
        <taxon>Bacillati</taxon>
        <taxon>Bacillota</taxon>
        <taxon>Bacilli</taxon>
        <taxon>Lactobacillales</taxon>
        <taxon>Streptococcaceae</taxon>
        <taxon>Streptococcus</taxon>
    </lineage>
</organism>
<sequence length="185" mass="20653">MANAIVEKAKERMSHSHQNLAREFGAVRAGRANASLLDRISVEYYGVETPLNQIASITIPEARVLLVTPFDKSSLKDIERAINASDLGITPASDGSVIRLVIPALTEETRRDLAKEVKKIGENAKIAIRNIRRDAMDEAKKQEKAKEITEDELKTLEKDIQKVTDDAVKHIDEMTAHKEKELLEV</sequence>